<name>QCR2_YEAST</name>
<sequence>MLSAARLQFAQGSVRRLTVSARDAPTKISTLAVKVHGGSRYATKDGVAHLLNRFNFQNTNTRSALKLVRESELLGGTFKSTLDREYITLKATFLKDDLPYYVNALADVLYKTAFKPHELTESVLPAARYDYAVAEQCPVKSAEDQLYAITFRKGLGNPLLYDGVERVSLQDIKDFADKVYTKENLEVSGENVVEADLKRFVDESLLSTLPAGKSLVSKSEPKFFLGEENRVRFIGDSVAAIGIPVNKASLAQYEVLANYLTSALSELSGLISSAKLDKFTDGGLFTLFVRDQDSAVVSSNIKKIVADLKKGKDLSPAINYTKLKNAVQNESVSSPIELNFDAVKDFKLGKFNYVAVGDVSNLPYLDEL</sequence>
<comment type="function">
    <text evidence="13">Component of the ubiquinol-cytochrome c oxidoreductase, a multisubunit transmembrane complex that is part of the mitochondrial electron transport chain which drives oxidative phosphorylation. The respiratory chain contains 3 multisubunit complexes succinate dehydrogenase (complex II, CII), ubiquinol-cytochrome c oxidoreductase (cytochrome b-c1 complex, complex III, CIII) and cytochrome c oxidase (complex IV, CIV), that cooperate to transfer electrons derived from NADH and succinate to molecular oxygen, creating an electrochemical gradient over the inner membrane that drives transmembrane transport and the ATP synthase. The cytochrome b-c1 complex catalyzes electron transfer from ubiquinol to cytochrome c, linking this redox reaction to translocation of protons across the mitochondrial inner membrane, with protons being carried across the membrane as hydrogens on the quinol. In the process called Q cycle, 2 protons are consumed from the matrix, 4 protons are released into the intermembrane space and 2 electrons are passed to cytochrome c.</text>
</comment>
<comment type="subunit">
    <text evidence="1 2 3 5 7 10 11">Component of the ubiquinol-cytochrome c oxidoreductase (cytochrome b-c1 complex, complex III, CIII), a multisubunit enzyme composed of 10 subunits. The complex is composed of 3 respiratory subunits cytochrome b (COB), cytochrome c1 (CYT1) and Rieske protein (RIP1), 2 core protein subunits COR1 and QCR2, and 5 low-molecular weight protein subunits QCR6, QCR7, QCR8, QCR9 and QCR10 (PubMed:10873857, PubMed:11880631, PubMed:18390544, PubMed:30598554). The complex exists as an obligatory dimer and forms supercomplexes (SCs) in the inner mitochondrial membrane with a monomer or a dimer of cytochrome c oxidase (complex IV, CIV), resulting in 2 different assemblies (supercomplexes III(2)IV and III(2)IV(2)) (PubMed:10764779, PubMed:10775262, PubMed:30598554, PubMed:30598556).</text>
</comment>
<comment type="interaction">
    <interactant intactId="EBI-19929">
        <id>P07257</id>
    </interactant>
    <interactant intactId="EBI-19922">
        <id>P07256</id>
        <label>COR1</label>
    </interactant>
    <organismsDiffer>false</organismsDiffer>
    <experiments>4</experiments>
</comment>
<comment type="subcellular location">
    <subcellularLocation>
        <location evidence="4 7 8 10">Mitochondrion inner membrane</location>
        <topology evidence="7 10">Peripheral membrane protein</topology>
        <orientation evidence="7 10">Matrix side</orientation>
    </subcellularLocation>
</comment>
<comment type="miscellaneous">
    <text evidence="6">Present with 35700 molecules/cell in log phase SD medium.</text>
</comment>
<comment type="similarity">
    <text evidence="12">Belongs to the peptidase M16 family. UQCRC2/QCR2 subfamily.</text>
</comment>
<comment type="caution">
    <text evidence="12">Does not seem to have protease activity as it lacks the zinc-binding site.</text>
</comment>
<keyword id="KW-0002">3D-structure</keyword>
<keyword id="KW-0903">Direct protein sequencing</keyword>
<keyword id="KW-0249">Electron transport</keyword>
<keyword id="KW-0472">Membrane</keyword>
<keyword id="KW-0496">Mitochondrion</keyword>
<keyword id="KW-0999">Mitochondrion inner membrane</keyword>
<keyword id="KW-0597">Phosphoprotein</keyword>
<keyword id="KW-1185">Reference proteome</keyword>
<keyword id="KW-0679">Respiratory chain</keyword>
<keyword id="KW-0809">Transit peptide</keyword>
<keyword id="KW-0813">Transport</keyword>
<dbReference type="EMBL" id="X05120">
    <property type="protein sequence ID" value="CAA28768.1"/>
    <property type="molecule type" value="Genomic_DNA"/>
</dbReference>
<dbReference type="EMBL" id="U25841">
    <property type="protein sequence ID" value="AAB64620.1"/>
    <property type="molecule type" value="Genomic_DNA"/>
</dbReference>
<dbReference type="EMBL" id="AY558068">
    <property type="protein sequence ID" value="AAS56394.1"/>
    <property type="molecule type" value="Genomic_DNA"/>
</dbReference>
<dbReference type="EMBL" id="BK006949">
    <property type="protein sequence ID" value="DAA11607.1"/>
    <property type="molecule type" value="Genomic_DNA"/>
</dbReference>
<dbReference type="PIR" id="A27535">
    <property type="entry name" value="A27535"/>
</dbReference>
<dbReference type="RefSeq" id="NP_015517.1">
    <property type="nucleotide sequence ID" value="NM_001184288.1"/>
</dbReference>
<dbReference type="PDB" id="1EZV">
    <property type="method" value="X-ray"/>
    <property type="resolution" value="2.30 A"/>
    <property type="chains" value="B=17-368"/>
</dbReference>
<dbReference type="PDB" id="1KB9">
    <property type="method" value="X-ray"/>
    <property type="resolution" value="2.30 A"/>
    <property type="chains" value="B=17-368"/>
</dbReference>
<dbReference type="PDB" id="1KYO">
    <property type="method" value="X-ray"/>
    <property type="resolution" value="2.97 A"/>
    <property type="chains" value="B/M=17-368"/>
</dbReference>
<dbReference type="PDB" id="1P84">
    <property type="method" value="X-ray"/>
    <property type="resolution" value="2.50 A"/>
    <property type="chains" value="B=17-368"/>
</dbReference>
<dbReference type="PDB" id="2IBZ">
    <property type="method" value="X-ray"/>
    <property type="resolution" value="2.30 A"/>
    <property type="chains" value="B=17-368"/>
</dbReference>
<dbReference type="PDB" id="3CX5">
    <property type="method" value="X-ray"/>
    <property type="resolution" value="1.90 A"/>
    <property type="chains" value="B/M=17-368"/>
</dbReference>
<dbReference type="PDB" id="3CXH">
    <property type="method" value="X-ray"/>
    <property type="resolution" value="2.50 A"/>
    <property type="chains" value="B/M=17-368"/>
</dbReference>
<dbReference type="PDB" id="4PD4">
    <property type="method" value="X-ray"/>
    <property type="resolution" value="3.04 A"/>
    <property type="chains" value="B=17-368"/>
</dbReference>
<dbReference type="PDB" id="6GIQ">
    <property type="method" value="EM"/>
    <property type="resolution" value="3.23 A"/>
    <property type="chains" value="B/M=1-368"/>
</dbReference>
<dbReference type="PDB" id="6HU9">
    <property type="method" value="EM"/>
    <property type="resolution" value="3.35 A"/>
    <property type="chains" value="B/M=17-368"/>
</dbReference>
<dbReference type="PDB" id="6T0B">
    <property type="method" value="EM"/>
    <property type="resolution" value="2.80 A"/>
    <property type="chains" value="B/M=17-368"/>
</dbReference>
<dbReference type="PDB" id="6T15">
    <property type="method" value="EM"/>
    <property type="resolution" value="3.29 A"/>
    <property type="chains" value="B/M=17-368"/>
</dbReference>
<dbReference type="PDB" id="6YMX">
    <property type="method" value="EM"/>
    <property type="resolution" value="3.17 A"/>
    <property type="chains" value="B/M=17-368"/>
</dbReference>
<dbReference type="PDB" id="8E7S">
    <property type="method" value="EM"/>
    <property type="resolution" value="3.20 A"/>
    <property type="chains" value="B/b=1-368"/>
</dbReference>
<dbReference type="PDB" id="8EC0">
    <property type="method" value="EM"/>
    <property type="resolution" value="3.30 A"/>
    <property type="chains" value="B/b=1-368"/>
</dbReference>
<dbReference type="PDB" id="8YHQ">
    <property type="method" value="EM"/>
    <property type="resolution" value="2.42 A"/>
    <property type="chains" value="B/K=17-368"/>
</dbReference>
<dbReference type="PDB" id="8YIN">
    <property type="method" value="EM"/>
    <property type="resolution" value="2.74 A"/>
    <property type="chains" value="B/M=17-368"/>
</dbReference>
<dbReference type="PDB" id="8ZMT">
    <property type="method" value="EM"/>
    <property type="resolution" value="2.52 A"/>
    <property type="chains" value="B/M=17-368"/>
</dbReference>
<dbReference type="PDB" id="9ETZ">
    <property type="method" value="EM"/>
    <property type="resolution" value="2.40 A"/>
    <property type="chains" value="B/M=17-368"/>
</dbReference>
<dbReference type="PDBsum" id="1EZV"/>
<dbReference type="PDBsum" id="1KB9"/>
<dbReference type="PDBsum" id="1KYO"/>
<dbReference type="PDBsum" id="1P84"/>
<dbReference type="PDBsum" id="2IBZ"/>
<dbReference type="PDBsum" id="3CX5"/>
<dbReference type="PDBsum" id="3CXH"/>
<dbReference type="PDBsum" id="4PD4"/>
<dbReference type="PDBsum" id="6GIQ"/>
<dbReference type="PDBsum" id="6HU9"/>
<dbReference type="PDBsum" id="6T0B"/>
<dbReference type="PDBsum" id="6T15"/>
<dbReference type="PDBsum" id="6YMX"/>
<dbReference type="PDBsum" id="8E7S"/>
<dbReference type="PDBsum" id="8EC0"/>
<dbReference type="PDBsum" id="8YHQ"/>
<dbReference type="PDBsum" id="8YIN"/>
<dbReference type="PDBsum" id="8ZMT"/>
<dbReference type="PDBsum" id="9ETZ"/>
<dbReference type="EMDB" id="EMD-0262"/>
<dbReference type="EMDB" id="EMD-10317"/>
<dbReference type="EMDB" id="EMD-10340"/>
<dbReference type="EMDB" id="EMD-10847"/>
<dbReference type="EMDB" id="EMD-19963"/>
<dbReference type="EMDB" id="EMD-27940"/>
<dbReference type="EMDB" id="EMD-28011"/>
<dbReference type="SMR" id="P07257"/>
<dbReference type="BioGRID" id="36363">
    <property type="interactions" value="478"/>
</dbReference>
<dbReference type="ComplexPortal" id="CPX-567">
    <property type="entry name" value="Mitochondrial respiratory chain complex III"/>
</dbReference>
<dbReference type="DIP" id="DIP-3820N"/>
<dbReference type="FunCoup" id="P07257">
    <property type="interactions" value="385"/>
</dbReference>
<dbReference type="IntAct" id="P07257">
    <property type="interactions" value="60"/>
</dbReference>
<dbReference type="MINT" id="P07257"/>
<dbReference type="STRING" id="4932.YPR191W"/>
<dbReference type="iPTMnet" id="P07257"/>
<dbReference type="PaxDb" id="4932-YPR191W"/>
<dbReference type="PeptideAtlas" id="P07257"/>
<dbReference type="EnsemblFungi" id="YPR191W_mRNA">
    <property type="protein sequence ID" value="YPR191W"/>
    <property type="gene ID" value="YPR191W"/>
</dbReference>
<dbReference type="GeneID" id="856321"/>
<dbReference type="KEGG" id="sce:YPR191W"/>
<dbReference type="AGR" id="SGD:S000006395"/>
<dbReference type="SGD" id="S000006395">
    <property type="gene designation" value="QCR2"/>
</dbReference>
<dbReference type="VEuPathDB" id="FungiDB:YPR191W"/>
<dbReference type="eggNOG" id="KOG2583">
    <property type="taxonomic scope" value="Eukaryota"/>
</dbReference>
<dbReference type="GeneTree" id="ENSGT00940000173495"/>
<dbReference type="HOGENOM" id="CLU_009902_0_1_1"/>
<dbReference type="InParanoid" id="P07257"/>
<dbReference type="OMA" id="YKYQDAG"/>
<dbReference type="OrthoDB" id="6369905at2759"/>
<dbReference type="BioCyc" id="MetaCyc:YPR191W-MONOMER"/>
<dbReference type="BioCyc" id="YEAST:YPR191W-MONOMER"/>
<dbReference type="Reactome" id="R-SCE-9865878">
    <property type="pathway name" value="Complex III assembly"/>
</dbReference>
<dbReference type="BioGRID-ORCS" id="856321">
    <property type="hits" value="4 hits in 10 CRISPR screens"/>
</dbReference>
<dbReference type="EvolutionaryTrace" id="P07257"/>
<dbReference type="PRO" id="PR:P07257"/>
<dbReference type="Proteomes" id="UP000002311">
    <property type="component" value="Chromosome XVI"/>
</dbReference>
<dbReference type="RNAct" id="P07257">
    <property type="molecule type" value="protein"/>
</dbReference>
<dbReference type="GO" id="GO:0030061">
    <property type="term" value="C:mitochondrial crista"/>
    <property type="evidence" value="ECO:0000314"/>
    <property type="project" value="SGD"/>
</dbReference>
<dbReference type="GO" id="GO:0005743">
    <property type="term" value="C:mitochondrial inner membrane"/>
    <property type="evidence" value="ECO:0000314"/>
    <property type="project" value="ComplexPortal"/>
</dbReference>
<dbReference type="GO" id="GO:0005739">
    <property type="term" value="C:mitochondrion"/>
    <property type="evidence" value="ECO:0000314"/>
    <property type="project" value="SGD"/>
</dbReference>
<dbReference type="GO" id="GO:0045275">
    <property type="term" value="C:respiratory chain complex III"/>
    <property type="evidence" value="ECO:0000314"/>
    <property type="project" value="SGD"/>
</dbReference>
<dbReference type="GO" id="GO:0046872">
    <property type="term" value="F:metal ion binding"/>
    <property type="evidence" value="ECO:0007669"/>
    <property type="project" value="InterPro"/>
</dbReference>
<dbReference type="GO" id="GO:0004222">
    <property type="term" value="F:metalloendopeptidase activity"/>
    <property type="evidence" value="ECO:0007669"/>
    <property type="project" value="InterPro"/>
</dbReference>
<dbReference type="GO" id="GO:0009060">
    <property type="term" value="P:aerobic respiration"/>
    <property type="evidence" value="ECO:0000315"/>
    <property type="project" value="SGD"/>
</dbReference>
<dbReference type="GO" id="GO:0045333">
    <property type="term" value="P:cellular respiration"/>
    <property type="evidence" value="ECO:0000314"/>
    <property type="project" value="ComplexPortal"/>
</dbReference>
<dbReference type="GO" id="GO:0006122">
    <property type="term" value="P:mitochondrial electron transport, ubiquinol to cytochrome c"/>
    <property type="evidence" value="ECO:0000314"/>
    <property type="project" value="ComplexPortal"/>
</dbReference>
<dbReference type="GO" id="GO:0006508">
    <property type="term" value="P:proteolysis"/>
    <property type="evidence" value="ECO:0007669"/>
    <property type="project" value="InterPro"/>
</dbReference>
<dbReference type="GO" id="GO:1902600">
    <property type="term" value="P:proton transmembrane transport"/>
    <property type="evidence" value="ECO:0007669"/>
    <property type="project" value="GOC"/>
</dbReference>
<dbReference type="FunFam" id="3.30.830.10:FF:000021">
    <property type="entry name" value="Cytochrome b-c1 complex subunit 2"/>
    <property type="match status" value="1"/>
</dbReference>
<dbReference type="FunFam" id="3.30.830.10:FF:000071">
    <property type="entry name" value="Cytochrome b-c1 complex subunit 2, mitochondrial"/>
    <property type="match status" value="1"/>
</dbReference>
<dbReference type="Gene3D" id="3.30.830.10">
    <property type="entry name" value="Metalloenzyme, LuxS/M16 peptidase-like"/>
    <property type="match status" value="2"/>
</dbReference>
<dbReference type="InterPro" id="IPR011249">
    <property type="entry name" value="Metalloenz_LuxS/M16"/>
</dbReference>
<dbReference type="InterPro" id="IPR050361">
    <property type="entry name" value="MPP/UQCRC_Complex"/>
</dbReference>
<dbReference type="InterPro" id="IPR011765">
    <property type="entry name" value="Pept_M16_N"/>
</dbReference>
<dbReference type="InterPro" id="IPR001431">
    <property type="entry name" value="Pept_M16_Zn_BS"/>
</dbReference>
<dbReference type="PANTHER" id="PTHR11851:SF209">
    <property type="entry name" value="CYTOCHROME B-C1 COMPLEX SUBUNIT 2, MITOCHONDRIAL"/>
    <property type="match status" value="1"/>
</dbReference>
<dbReference type="PANTHER" id="PTHR11851">
    <property type="entry name" value="METALLOPROTEASE"/>
    <property type="match status" value="1"/>
</dbReference>
<dbReference type="Pfam" id="PF00675">
    <property type="entry name" value="Peptidase_M16"/>
    <property type="match status" value="1"/>
</dbReference>
<dbReference type="SUPFAM" id="SSF63411">
    <property type="entry name" value="LuxS/MPP-like metallohydrolase"/>
    <property type="match status" value="2"/>
</dbReference>
<dbReference type="PROSITE" id="PS00143">
    <property type="entry name" value="INSULINASE"/>
    <property type="match status" value="1"/>
</dbReference>
<protein>
    <recommendedName>
        <fullName>Cytochrome b-c1 complex subunit 2, mitochondrial</fullName>
    </recommendedName>
    <alternativeName>
        <fullName>Complex III subunit 2</fullName>
    </alternativeName>
    <alternativeName>
        <fullName>Core protein II</fullName>
    </alternativeName>
    <alternativeName>
        <fullName>Ubiquinol-cytochrome c oxidoreductase core protein 2</fullName>
    </alternativeName>
</protein>
<reference key="1">
    <citation type="journal article" date="1987" name="Eur. J. Biochem.">
        <title>Subunit II of yeast QH2:cytochrome-c oxidoreductase. Nucleotide sequence of the gene and features of the protein.</title>
        <authorList>
            <person name="Oudshoorn P."/>
            <person name="van Steeg H."/>
            <person name="Swinkels B.W."/>
            <person name="Schoppink P."/>
            <person name="Grivell L.A."/>
        </authorList>
    </citation>
    <scope>NUCLEOTIDE SEQUENCE [GENOMIC DNA]</scope>
    <scope>PROTEIN SEQUENCE OF 17-22</scope>
</reference>
<reference key="2">
    <citation type="journal article" date="1997" name="Nature">
        <title>The nucleotide sequence of Saccharomyces cerevisiae chromosome XVI.</title>
        <authorList>
            <person name="Bussey H."/>
            <person name="Storms R.K."/>
            <person name="Ahmed A."/>
            <person name="Albermann K."/>
            <person name="Allen E."/>
            <person name="Ansorge W."/>
            <person name="Araujo R."/>
            <person name="Aparicio A."/>
            <person name="Barrell B.G."/>
            <person name="Badcock K."/>
            <person name="Benes V."/>
            <person name="Botstein D."/>
            <person name="Bowman S."/>
            <person name="Brueckner M."/>
            <person name="Carpenter J."/>
            <person name="Cherry J.M."/>
            <person name="Chung E."/>
            <person name="Churcher C.M."/>
            <person name="Coster F."/>
            <person name="Davis K."/>
            <person name="Davis R.W."/>
            <person name="Dietrich F.S."/>
            <person name="Delius H."/>
            <person name="DiPaolo T."/>
            <person name="Dubois E."/>
            <person name="Duesterhoeft A."/>
            <person name="Duncan M."/>
            <person name="Floeth M."/>
            <person name="Fortin N."/>
            <person name="Friesen J.D."/>
            <person name="Fritz C."/>
            <person name="Goffeau A."/>
            <person name="Hall J."/>
            <person name="Hebling U."/>
            <person name="Heumann K."/>
            <person name="Hilbert H."/>
            <person name="Hillier L.W."/>
            <person name="Hunicke-Smith S."/>
            <person name="Hyman R.W."/>
            <person name="Johnston M."/>
            <person name="Kalman S."/>
            <person name="Kleine K."/>
            <person name="Komp C."/>
            <person name="Kurdi O."/>
            <person name="Lashkari D."/>
            <person name="Lew H."/>
            <person name="Lin A."/>
            <person name="Lin D."/>
            <person name="Louis E.J."/>
            <person name="Marathe R."/>
            <person name="Messenguy F."/>
            <person name="Mewes H.-W."/>
            <person name="Mirtipati S."/>
            <person name="Moestl D."/>
            <person name="Mueller-Auer S."/>
            <person name="Namath A."/>
            <person name="Nentwich U."/>
            <person name="Oefner P."/>
            <person name="Pearson D."/>
            <person name="Petel F.X."/>
            <person name="Pohl T.M."/>
            <person name="Purnelle B."/>
            <person name="Rajandream M.A."/>
            <person name="Rechmann S."/>
            <person name="Rieger M."/>
            <person name="Riles L."/>
            <person name="Roberts D."/>
            <person name="Schaefer M."/>
            <person name="Scharfe M."/>
            <person name="Scherens B."/>
            <person name="Schramm S."/>
            <person name="Schroeder M."/>
            <person name="Sdicu A.-M."/>
            <person name="Tettelin H."/>
            <person name="Urrestarazu L.A."/>
            <person name="Ushinsky S."/>
            <person name="Vierendeels F."/>
            <person name="Vissers S."/>
            <person name="Voss H."/>
            <person name="Walsh S.V."/>
            <person name="Wambutt R."/>
            <person name="Wang Y."/>
            <person name="Wedler E."/>
            <person name="Wedler H."/>
            <person name="Winnett E."/>
            <person name="Zhong W.-W."/>
            <person name="Zollner A."/>
            <person name="Vo D.H."/>
            <person name="Hani J."/>
        </authorList>
    </citation>
    <scope>NUCLEOTIDE SEQUENCE [LARGE SCALE GENOMIC DNA]</scope>
    <source>
        <strain>ATCC 204508 / S288c</strain>
    </source>
</reference>
<reference key="3">
    <citation type="journal article" date="2014" name="G3 (Bethesda)">
        <title>The reference genome sequence of Saccharomyces cerevisiae: Then and now.</title>
        <authorList>
            <person name="Engel S.R."/>
            <person name="Dietrich F.S."/>
            <person name="Fisk D.G."/>
            <person name="Binkley G."/>
            <person name="Balakrishnan R."/>
            <person name="Costanzo M.C."/>
            <person name="Dwight S.S."/>
            <person name="Hitz B.C."/>
            <person name="Karra K."/>
            <person name="Nash R.S."/>
            <person name="Weng S."/>
            <person name="Wong E.D."/>
            <person name="Lloyd P."/>
            <person name="Skrzypek M.S."/>
            <person name="Miyasato S.R."/>
            <person name="Simison M."/>
            <person name="Cherry J.M."/>
        </authorList>
    </citation>
    <scope>GENOME REANNOTATION</scope>
    <source>
        <strain>ATCC 204508 / S288c</strain>
    </source>
</reference>
<reference key="4">
    <citation type="journal article" date="2007" name="Genome Res.">
        <title>Approaching a complete repository of sequence-verified protein-encoding clones for Saccharomyces cerevisiae.</title>
        <authorList>
            <person name="Hu Y."/>
            <person name="Rolfs A."/>
            <person name="Bhullar B."/>
            <person name="Murthy T.V.S."/>
            <person name="Zhu C."/>
            <person name="Berger M.F."/>
            <person name="Camargo A.A."/>
            <person name="Kelley F."/>
            <person name="McCarron S."/>
            <person name="Jepson D."/>
            <person name="Richardson A."/>
            <person name="Raphael J."/>
            <person name="Moreira D."/>
            <person name="Taycher E."/>
            <person name="Zuo D."/>
            <person name="Mohr S."/>
            <person name="Kane M.F."/>
            <person name="Williamson J."/>
            <person name="Simpson A.J.G."/>
            <person name="Bulyk M.L."/>
            <person name="Harlow E."/>
            <person name="Marsischky G."/>
            <person name="Kolodner R.D."/>
            <person name="LaBaer J."/>
        </authorList>
    </citation>
    <scope>NUCLEOTIDE SEQUENCE [GENOMIC DNA]</scope>
    <source>
        <strain>ATCC 204508 / S288c</strain>
    </source>
</reference>
<reference key="5">
    <citation type="journal article" date="2000" name="EMBO J.">
        <title>Supercomplexes in the respiratory chains of yeast and mammalian mitochondria.</title>
        <authorList>
            <person name="Schaegger H."/>
            <person name="Pfeiffer K."/>
        </authorList>
    </citation>
    <scope>FORMATION OF CYTOCHROME BC1-CYTOCHROME C OXIDASE SUPERCOMPLEX</scope>
</reference>
<reference key="6">
    <citation type="journal article" date="2000" name="J. Biol. Chem.">
        <title>The cytochrome bc1 and cytochrome c oxidase complexes associate to form a single supracomplex in yeast mitochondria.</title>
        <authorList>
            <person name="Cruciat C.M."/>
            <person name="Brunner S."/>
            <person name="Baumann F."/>
            <person name="Neupert W."/>
            <person name="Stuart R.A."/>
        </authorList>
    </citation>
    <scope>FORMATION OF CYTOCHROME BC1-CYTOCHROME C OXIDASE SUPERCOMPLEX</scope>
</reference>
<reference key="7">
    <citation type="journal article" date="2001" name="Biochemistry">
        <title>Yeast mitochondrial dehydrogenases are associated in a supramolecular complex.</title>
        <authorList>
            <person name="Grandier-Vazeille X."/>
            <person name="Bathany K."/>
            <person name="Chaignepain S."/>
            <person name="Camougrand N."/>
            <person name="Manon S."/>
            <person name="Schmitter J.-M."/>
        </authorList>
    </citation>
    <scope>SUBCELLULAR LOCATION</scope>
</reference>
<reference key="8">
    <citation type="journal article" date="2003" name="Nature">
        <title>Global analysis of protein expression in yeast.</title>
        <authorList>
            <person name="Ghaemmaghami S."/>
            <person name="Huh W.-K."/>
            <person name="Bower K."/>
            <person name="Howson R.W."/>
            <person name="Belle A."/>
            <person name="Dephoure N."/>
            <person name="O'Shea E.K."/>
            <person name="Weissman J.S."/>
        </authorList>
    </citation>
    <scope>LEVEL OF PROTEIN EXPRESSION [LARGE SCALE ANALYSIS]</scope>
</reference>
<reference key="9">
    <citation type="journal article" date="2007" name="Mol. Cell. Proteomics">
        <title>Profiling phosphoproteins of yeast mitochondria reveals a role of phosphorylation in assembly of the ATP synthase.</title>
        <authorList>
            <person name="Reinders J."/>
            <person name="Wagner K."/>
            <person name="Zahedi R.P."/>
            <person name="Stojanovski D."/>
            <person name="Eyrich B."/>
            <person name="van der Laan M."/>
            <person name="Rehling P."/>
            <person name="Sickmann A."/>
            <person name="Pfanner N."/>
            <person name="Meisinger C."/>
        </authorList>
    </citation>
    <scope>PHOSPHORYLATION [LARGE SCALE ANALYSIS] AT SER-141</scope>
    <scope>IDENTIFICATION BY MASS SPECTROMETRY [LARGE SCALE ANALYSIS]</scope>
    <source>
        <strain>ATCC 76625 / YPH499</strain>
    </source>
</reference>
<reference key="10">
    <citation type="journal article" date="2009" name="Science">
        <title>Global analysis of Cdk1 substrate phosphorylation sites provides insights into evolution.</title>
        <authorList>
            <person name="Holt L.J."/>
            <person name="Tuch B.B."/>
            <person name="Villen J."/>
            <person name="Johnson A.D."/>
            <person name="Gygi S.P."/>
            <person name="Morgan D.O."/>
        </authorList>
    </citation>
    <scope>PHOSPHORYLATION [LARGE SCALE ANALYSIS] AT SER-168</scope>
    <scope>IDENTIFICATION BY MASS SPECTROMETRY [LARGE SCALE ANALYSIS]</scope>
</reference>
<reference key="11">
    <citation type="journal article" date="2012" name="Mol. Cell. Proteomics">
        <title>Intermembrane space proteome of yeast mitochondria.</title>
        <authorList>
            <person name="Voegtle F.N."/>
            <person name="Burkhart J.M."/>
            <person name="Rao S."/>
            <person name="Gerbeth C."/>
            <person name="Hinrichs J."/>
            <person name="Martinou J.C."/>
            <person name="Chacinska A."/>
            <person name="Sickmann A."/>
            <person name="Zahedi R.P."/>
            <person name="Meisinger C."/>
        </authorList>
    </citation>
    <scope>IDENTIFICATION BY MASS SPECTROMETRY</scope>
    <scope>SUBCELLULAR LOCATION [LARGE SCALE ANALYSIS]</scope>
</reference>
<reference key="12">
    <citation type="journal article" date="2000" name="Structure">
        <title>Structure at 2.3 A resolution of the cytochrome bc1 complex from the yeast Saccharomyces cerevisiae co-crystallized with an antibody Fv fragment.</title>
        <authorList>
            <person name="Hunte C."/>
            <person name="Koepke J."/>
            <person name="Lange C."/>
            <person name="Rossmanith T."/>
            <person name="Michel H."/>
        </authorList>
    </citation>
    <scope>X-RAY CRYSTALLOGRAPHY (2.3 ANGSTROMS)</scope>
</reference>
<reference key="13">
    <citation type="journal article" date="2002" name="Proc. Natl. Acad. Sci. U.S.A.">
        <title>Crystal structure of the yeast cytochrome bc1 complex with its bound substrate cytochrome c.</title>
        <authorList>
            <person name="Lange C."/>
            <person name="Hunte C."/>
        </authorList>
    </citation>
    <scope>X-RAY CRYSTALLOGRAPHY (2.97 ANGSTROMS)</scope>
</reference>
<reference key="14">
    <citation type="journal article" date="2008" name="J. Biol. Chem.">
        <title>Structure of complex III with bound cytochrome c in reduced state and definition of a minimal core interface for electron transfer.</title>
        <authorList>
            <person name="Solmaz S.R."/>
            <person name="Hunte C."/>
        </authorList>
    </citation>
    <scope>X-RAY CRYSTALLOGRAPHY (1.90 ANGSTROMS)</scope>
</reference>
<reference key="15">
    <citation type="journal article" date="2019" name="Nat. Struct. Mol. Biol.">
        <title>Cryo-EM structure of the yeast respiratory supercomplex.</title>
        <authorList>
            <person name="Rathore S."/>
            <person name="Berndtsson J."/>
            <person name="Marin-Buera L."/>
            <person name="Conrad J."/>
            <person name="Carroni M."/>
            <person name="Brzezinski P."/>
            <person name="Ott M."/>
        </authorList>
    </citation>
    <scope>STRUCTURE BY ELECTRON MICROSCOPY (3.23 ANGSTROMS)</scope>
</reference>
<reference key="16">
    <citation type="journal article" date="2019" name="Nat. Struct. Mol. Biol.">
        <title>Structure of yeast cytochrome c oxidase in a supercomplex with cytochrome bc1.</title>
        <authorList>
            <person name="Hartley A.M."/>
            <person name="Lukoyanova N."/>
            <person name="Zhang Y."/>
            <person name="Cabrera-Orefice A."/>
            <person name="Arnold S."/>
            <person name="Meunier B."/>
            <person name="Pinotsis N."/>
            <person name="Marechal A."/>
        </authorList>
    </citation>
    <scope>STRUCTURE BY ELECTRON MICROSCOPY (3.35 ANGSTROMS)</scope>
</reference>
<proteinExistence type="evidence at protein level"/>
<accession>P07257</accession>
<accession>D6W4J1</accession>
<evidence type="ECO:0000269" key="1">
    <source>
    </source>
</evidence>
<evidence type="ECO:0000269" key="2">
    <source>
    </source>
</evidence>
<evidence type="ECO:0000269" key="3">
    <source>
    </source>
</evidence>
<evidence type="ECO:0000269" key="4">
    <source>
    </source>
</evidence>
<evidence type="ECO:0000269" key="5">
    <source>
    </source>
</evidence>
<evidence type="ECO:0000269" key="6">
    <source>
    </source>
</evidence>
<evidence type="ECO:0000269" key="7">
    <source>
    </source>
</evidence>
<evidence type="ECO:0000269" key="8">
    <source>
    </source>
</evidence>
<evidence type="ECO:0000269" key="9">
    <source>
    </source>
</evidence>
<evidence type="ECO:0000269" key="10">
    <source>
    </source>
</evidence>
<evidence type="ECO:0000269" key="11">
    <source>
    </source>
</evidence>
<evidence type="ECO:0000305" key="12"/>
<evidence type="ECO:0000305" key="13">
    <source>
    </source>
</evidence>
<evidence type="ECO:0007744" key="14">
    <source>
    </source>
</evidence>
<evidence type="ECO:0007744" key="15">
    <source>
    </source>
</evidence>
<evidence type="ECO:0007829" key="16">
    <source>
        <dbReference type="PDB" id="1KB9"/>
    </source>
</evidence>
<evidence type="ECO:0007829" key="17">
    <source>
        <dbReference type="PDB" id="1P84"/>
    </source>
</evidence>
<evidence type="ECO:0007829" key="18">
    <source>
        <dbReference type="PDB" id="3CX5"/>
    </source>
</evidence>
<evidence type="ECO:0007829" key="19">
    <source>
        <dbReference type="PDB" id="6T15"/>
    </source>
</evidence>
<evidence type="ECO:0007829" key="20">
    <source>
        <dbReference type="PDB" id="8E7S"/>
    </source>
</evidence>
<evidence type="ECO:0007829" key="21">
    <source>
        <dbReference type="PDB" id="8EC0"/>
    </source>
</evidence>
<gene>
    <name type="primary">QCR2</name>
    <name type="synonym">COR2</name>
    <name type="synonym">UCR2</name>
    <name type="ordered locus">YPR191W</name>
    <name type="ORF">P9677.6</name>
</gene>
<feature type="transit peptide" description="Mitochondrion" evidence="9">
    <location>
        <begin position="1"/>
        <end position="16"/>
    </location>
</feature>
<feature type="chain" id="PRO_0000026801" description="Cytochrome b-c1 complex subunit 2, mitochondrial">
    <location>
        <begin position="17"/>
        <end position="368"/>
    </location>
</feature>
<feature type="modified residue" description="Phosphoserine" evidence="14">
    <location>
        <position position="141"/>
    </location>
</feature>
<feature type="modified residue" description="Phosphoserine" evidence="15">
    <location>
        <position position="168"/>
    </location>
</feature>
<feature type="strand" evidence="18">
    <location>
        <begin position="18"/>
        <end position="22"/>
    </location>
</feature>
<feature type="strand" evidence="18">
    <location>
        <begin position="27"/>
        <end position="36"/>
    </location>
</feature>
<feature type="helix" evidence="18">
    <location>
        <begin position="39"/>
        <end position="41"/>
    </location>
</feature>
<feature type="strand" evidence="21">
    <location>
        <begin position="43"/>
        <end position="46"/>
    </location>
</feature>
<feature type="helix" evidence="18">
    <location>
        <begin position="47"/>
        <end position="54"/>
    </location>
</feature>
<feature type="strand" evidence="20">
    <location>
        <begin position="55"/>
        <end position="57"/>
    </location>
</feature>
<feature type="strand" evidence="18">
    <location>
        <begin position="59"/>
        <end position="62"/>
    </location>
</feature>
<feature type="helix" evidence="18">
    <location>
        <begin position="64"/>
        <end position="74"/>
    </location>
</feature>
<feature type="strand" evidence="18">
    <location>
        <begin position="77"/>
        <end position="82"/>
    </location>
</feature>
<feature type="strand" evidence="18">
    <location>
        <begin position="87"/>
        <end position="94"/>
    </location>
</feature>
<feature type="helix" evidence="18">
    <location>
        <begin position="95"/>
        <end position="97"/>
    </location>
</feature>
<feature type="helix" evidence="18">
    <location>
        <begin position="98"/>
        <end position="111"/>
    </location>
</feature>
<feature type="helix" evidence="18">
    <location>
        <begin position="116"/>
        <end position="121"/>
    </location>
</feature>
<feature type="helix" evidence="18">
    <location>
        <begin position="123"/>
        <end position="135"/>
    </location>
</feature>
<feature type="helix" evidence="18">
    <location>
        <begin position="138"/>
        <end position="151"/>
    </location>
</feature>
<feature type="turn" evidence="18">
    <location>
        <begin position="152"/>
        <end position="156"/>
    </location>
</feature>
<feature type="strand" evidence="18">
    <location>
        <begin position="163"/>
        <end position="165"/>
    </location>
</feature>
<feature type="helix" evidence="18">
    <location>
        <begin position="169"/>
        <end position="179"/>
    </location>
</feature>
<feature type="helix" evidence="18">
    <location>
        <begin position="182"/>
        <end position="184"/>
    </location>
</feature>
<feature type="strand" evidence="18">
    <location>
        <begin position="185"/>
        <end position="192"/>
    </location>
</feature>
<feature type="helix" evidence="18">
    <location>
        <begin position="194"/>
        <end position="203"/>
    </location>
</feature>
<feature type="turn" evidence="18">
    <location>
        <begin position="205"/>
        <end position="208"/>
    </location>
</feature>
<feature type="strand" evidence="18">
    <location>
        <begin position="228"/>
        <end position="232"/>
    </location>
</feature>
<feature type="strand" evidence="18">
    <location>
        <begin position="234"/>
        <end position="245"/>
    </location>
</feature>
<feature type="turn" evidence="18">
    <location>
        <begin position="247"/>
        <end position="249"/>
    </location>
</feature>
<feature type="helix" evidence="18">
    <location>
        <begin position="250"/>
        <end position="261"/>
    </location>
</feature>
<feature type="strand" evidence="17">
    <location>
        <begin position="262"/>
        <end position="265"/>
    </location>
</feature>
<feature type="helix" evidence="18">
    <location>
        <begin position="268"/>
        <end position="270"/>
    </location>
</feature>
<feature type="strand" evidence="18">
    <location>
        <begin position="272"/>
        <end position="279"/>
    </location>
</feature>
<feature type="strand" evidence="18">
    <location>
        <begin position="282"/>
        <end position="292"/>
    </location>
</feature>
<feature type="helix" evidence="18">
    <location>
        <begin position="294"/>
        <end position="309"/>
    </location>
</feature>
<feature type="strand" evidence="19">
    <location>
        <begin position="310"/>
        <end position="313"/>
    </location>
</feature>
<feature type="helix" evidence="18">
    <location>
        <begin position="315"/>
        <end position="317"/>
    </location>
</feature>
<feature type="helix" evidence="18">
    <location>
        <begin position="318"/>
        <end position="328"/>
    </location>
</feature>
<feature type="helix" evidence="16">
    <location>
        <begin position="329"/>
        <end position="331"/>
    </location>
</feature>
<feature type="strand" evidence="19">
    <location>
        <begin position="332"/>
        <end position="334"/>
    </location>
</feature>
<feature type="helix" evidence="18">
    <location>
        <begin position="340"/>
        <end position="342"/>
    </location>
</feature>
<feature type="strand" evidence="19">
    <location>
        <begin position="345"/>
        <end position="347"/>
    </location>
</feature>
<feature type="strand" evidence="18">
    <location>
        <begin position="352"/>
        <end position="358"/>
    </location>
</feature>
<feature type="helix" evidence="18">
    <location>
        <begin position="359"/>
        <end position="361"/>
    </location>
</feature>
<feature type="helix" evidence="18">
    <location>
        <begin position="365"/>
        <end position="367"/>
    </location>
</feature>
<organism>
    <name type="scientific">Saccharomyces cerevisiae (strain ATCC 204508 / S288c)</name>
    <name type="common">Baker's yeast</name>
    <dbReference type="NCBI Taxonomy" id="559292"/>
    <lineage>
        <taxon>Eukaryota</taxon>
        <taxon>Fungi</taxon>
        <taxon>Dikarya</taxon>
        <taxon>Ascomycota</taxon>
        <taxon>Saccharomycotina</taxon>
        <taxon>Saccharomycetes</taxon>
        <taxon>Saccharomycetales</taxon>
        <taxon>Saccharomycetaceae</taxon>
        <taxon>Saccharomyces</taxon>
    </lineage>
</organism>